<accession>Q6ALZ5</accession>
<organism>
    <name type="scientific">Desulfotalea psychrophila (strain LSv54 / DSM 12343)</name>
    <dbReference type="NCBI Taxonomy" id="177439"/>
    <lineage>
        <taxon>Bacteria</taxon>
        <taxon>Pseudomonadati</taxon>
        <taxon>Thermodesulfobacteriota</taxon>
        <taxon>Desulfobulbia</taxon>
        <taxon>Desulfobulbales</taxon>
        <taxon>Desulfocapsaceae</taxon>
        <taxon>Desulfotalea</taxon>
    </lineage>
</organism>
<protein>
    <recommendedName>
        <fullName evidence="1">Bifunctional protein FolD</fullName>
    </recommendedName>
    <domain>
        <recommendedName>
            <fullName evidence="1">Methylenetetrahydrofolate dehydrogenase</fullName>
            <ecNumber evidence="1">1.5.1.5</ecNumber>
        </recommendedName>
    </domain>
    <domain>
        <recommendedName>
            <fullName evidence="1">Methenyltetrahydrofolate cyclohydrolase</fullName>
            <ecNumber evidence="1">3.5.4.9</ecNumber>
        </recommendedName>
    </domain>
</protein>
<keyword id="KW-0028">Amino-acid biosynthesis</keyword>
<keyword id="KW-0368">Histidine biosynthesis</keyword>
<keyword id="KW-0378">Hydrolase</keyword>
<keyword id="KW-0486">Methionine biosynthesis</keyword>
<keyword id="KW-0511">Multifunctional enzyme</keyword>
<keyword id="KW-0521">NADP</keyword>
<keyword id="KW-0554">One-carbon metabolism</keyword>
<keyword id="KW-0560">Oxidoreductase</keyword>
<keyword id="KW-0658">Purine biosynthesis</keyword>
<keyword id="KW-1185">Reference proteome</keyword>
<comment type="function">
    <text evidence="1">Catalyzes the oxidation of 5,10-methylenetetrahydrofolate to 5,10-methenyltetrahydrofolate and then the hydrolysis of 5,10-methenyltetrahydrofolate to 10-formyltetrahydrofolate.</text>
</comment>
<comment type="catalytic activity">
    <reaction evidence="1">
        <text>(6R)-5,10-methylene-5,6,7,8-tetrahydrofolate + NADP(+) = (6R)-5,10-methenyltetrahydrofolate + NADPH</text>
        <dbReference type="Rhea" id="RHEA:22812"/>
        <dbReference type="ChEBI" id="CHEBI:15636"/>
        <dbReference type="ChEBI" id="CHEBI:57455"/>
        <dbReference type="ChEBI" id="CHEBI:57783"/>
        <dbReference type="ChEBI" id="CHEBI:58349"/>
        <dbReference type="EC" id="1.5.1.5"/>
    </reaction>
</comment>
<comment type="catalytic activity">
    <reaction evidence="1">
        <text>(6R)-5,10-methenyltetrahydrofolate + H2O = (6R)-10-formyltetrahydrofolate + H(+)</text>
        <dbReference type="Rhea" id="RHEA:23700"/>
        <dbReference type="ChEBI" id="CHEBI:15377"/>
        <dbReference type="ChEBI" id="CHEBI:15378"/>
        <dbReference type="ChEBI" id="CHEBI:57455"/>
        <dbReference type="ChEBI" id="CHEBI:195366"/>
        <dbReference type="EC" id="3.5.4.9"/>
    </reaction>
</comment>
<comment type="pathway">
    <text evidence="1">One-carbon metabolism; tetrahydrofolate interconversion.</text>
</comment>
<comment type="subunit">
    <text evidence="1">Homodimer.</text>
</comment>
<comment type="similarity">
    <text evidence="1">Belongs to the tetrahydrofolate dehydrogenase/cyclohydrolase family.</text>
</comment>
<comment type="sequence caution" evidence="2">
    <conflict type="erroneous initiation">
        <sequence resource="EMBL-CDS" id="CAG36630"/>
    </conflict>
</comment>
<evidence type="ECO:0000255" key="1">
    <source>
        <dbReference type="HAMAP-Rule" id="MF_01576"/>
    </source>
</evidence>
<evidence type="ECO:0000305" key="2"/>
<dbReference type="EC" id="1.5.1.5" evidence="1"/>
<dbReference type="EC" id="3.5.4.9" evidence="1"/>
<dbReference type="EMBL" id="CR522870">
    <property type="protein sequence ID" value="CAG36630.1"/>
    <property type="status" value="ALT_INIT"/>
    <property type="molecule type" value="Genomic_DNA"/>
</dbReference>
<dbReference type="RefSeq" id="WP_041278621.1">
    <property type="nucleotide sequence ID" value="NC_006138.1"/>
</dbReference>
<dbReference type="SMR" id="Q6ALZ5"/>
<dbReference type="STRING" id="177439.DP1901"/>
<dbReference type="KEGG" id="dps:DP1901"/>
<dbReference type="eggNOG" id="COG0190">
    <property type="taxonomic scope" value="Bacteria"/>
</dbReference>
<dbReference type="HOGENOM" id="CLU_034045_2_1_7"/>
<dbReference type="OrthoDB" id="9803580at2"/>
<dbReference type="UniPathway" id="UPA00193"/>
<dbReference type="Proteomes" id="UP000000602">
    <property type="component" value="Chromosome"/>
</dbReference>
<dbReference type="GO" id="GO:0005829">
    <property type="term" value="C:cytosol"/>
    <property type="evidence" value="ECO:0007669"/>
    <property type="project" value="TreeGrafter"/>
</dbReference>
<dbReference type="GO" id="GO:0004477">
    <property type="term" value="F:methenyltetrahydrofolate cyclohydrolase activity"/>
    <property type="evidence" value="ECO:0007669"/>
    <property type="project" value="UniProtKB-UniRule"/>
</dbReference>
<dbReference type="GO" id="GO:0004488">
    <property type="term" value="F:methylenetetrahydrofolate dehydrogenase (NADP+) activity"/>
    <property type="evidence" value="ECO:0007669"/>
    <property type="project" value="UniProtKB-UniRule"/>
</dbReference>
<dbReference type="GO" id="GO:0000105">
    <property type="term" value="P:L-histidine biosynthetic process"/>
    <property type="evidence" value="ECO:0007669"/>
    <property type="project" value="UniProtKB-KW"/>
</dbReference>
<dbReference type="GO" id="GO:0009086">
    <property type="term" value="P:methionine biosynthetic process"/>
    <property type="evidence" value="ECO:0007669"/>
    <property type="project" value="UniProtKB-KW"/>
</dbReference>
<dbReference type="GO" id="GO:0006164">
    <property type="term" value="P:purine nucleotide biosynthetic process"/>
    <property type="evidence" value="ECO:0007669"/>
    <property type="project" value="UniProtKB-KW"/>
</dbReference>
<dbReference type="GO" id="GO:0035999">
    <property type="term" value="P:tetrahydrofolate interconversion"/>
    <property type="evidence" value="ECO:0007669"/>
    <property type="project" value="UniProtKB-UniRule"/>
</dbReference>
<dbReference type="CDD" id="cd01080">
    <property type="entry name" value="NAD_bind_m-THF_DH_Cyclohyd"/>
    <property type="match status" value="1"/>
</dbReference>
<dbReference type="FunFam" id="3.40.50.720:FF:000189">
    <property type="entry name" value="Bifunctional protein FolD"/>
    <property type="match status" value="1"/>
</dbReference>
<dbReference type="FunFam" id="3.40.50.10860:FF:000005">
    <property type="entry name" value="C-1-tetrahydrofolate synthase, cytoplasmic, putative"/>
    <property type="match status" value="1"/>
</dbReference>
<dbReference type="Gene3D" id="3.40.50.10860">
    <property type="entry name" value="Leucine Dehydrogenase, chain A, domain 1"/>
    <property type="match status" value="1"/>
</dbReference>
<dbReference type="Gene3D" id="3.40.50.720">
    <property type="entry name" value="NAD(P)-binding Rossmann-like Domain"/>
    <property type="match status" value="1"/>
</dbReference>
<dbReference type="HAMAP" id="MF_01576">
    <property type="entry name" value="THF_DHG_CYH"/>
    <property type="match status" value="1"/>
</dbReference>
<dbReference type="InterPro" id="IPR046346">
    <property type="entry name" value="Aminoacid_DH-like_N_sf"/>
</dbReference>
<dbReference type="InterPro" id="IPR036291">
    <property type="entry name" value="NAD(P)-bd_dom_sf"/>
</dbReference>
<dbReference type="InterPro" id="IPR000672">
    <property type="entry name" value="THF_DH/CycHdrlase"/>
</dbReference>
<dbReference type="InterPro" id="IPR020630">
    <property type="entry name" value="THF_DH/CycHdrlase_cat_dom"/>
</dbReference>
<dbReference type="InterPro" id="IPR020867">
    <property type="entry name" value="THF_DH/CycHdrlase_CS"/>
</dbReference>
<dbReference type="InterPro" id="IPR020631">
    <property type="entry name" value="THF_DH/CycHdrlase_NAD-bd_dom"/>
</dbReference>
<dbReference type="NCBIfam" id="NF010765">
    <property type="entry name" value="PRK14168.1"/>
    <property type="match status" value="1"/>
</dbReference>
<dbReference type="PANTHER" id="PTHR48099:SF5">
    <property type="entry name" value="C-1-TETRAHYDROFOLATE SYNTHASE, CYTOPLASMIC"/>
    <property type="match status" value="1"/>
</dbReference>
<dbReference type="PANTHER" id="PTHR48099">
    <property type="entry name" value="C-1-TETRAHYDROFOLATE SYNTHASE, CYTOPLASMIC-RELATED"/>
    <property type="match status" value="1"/>
</dbReference>
<dbReference type="Pfam" id="PF00763">
    <property type="entry name" value="THF_DHG_CYH"/>
    <property type="match status" value="1"/>
</dbReference>
<dbReference type="Pfam" id="PF02882">
    <property type="entry name" value="THF_DHG_CYH_C"/>
    <property type="match status" value="1"/>
</dbReference>
<dbReference type="PRINTS" id="PR00085">
    <property type="entry name" value="THFDHDRGNASE"/>
</dbReference>
<dbReference type="SUPFAM" id="SSF53223">
    <property type="entry name" value="Aminoacid dehydrogenase-like, N-terminal domain"/>
    <property type="match status" value="1"/>
</dbReference>
<dbReference type="SUPFAM" id="SSF51735">
    <property type="entry name" value="NAD(P)-binding Rossmann-fold domains"/>
    <property type="match status" value="1"/>
</dbReference>
<dbReference type="PROSITE" id="PS00766">
    <property type="entry name" value="THF_DHG_CYH_1"/>
    <property type="match status" value="1"/>
</dbReference>
<dbReference type="PROSITE" id="PS00767">
    <property type="entry name" value="THF_DHG_CYH_2"/>
    <property type="match status" value="1"/>
</dbReference>
<reference key="1">
    <citation type="journal article" date="2004" name="Environ. Microbiol.">
        <title>The genome of Desulfotalea psychrophila, a sulfate-reducing bacterium from permanently cold Arctic sediments.</title>
        <authorList>
            <person name="Rabus R."/>
            <person name="Ruepp A."/>
            <person name="Frickey T."/>
            <person name="Rattei T."/>
            <person name="Fartmann B."/>
            <person name="Stark M."/>
            <person name="Bauer M."/>
            <person name="Zibat A."/>
            <person name="Lombardot T."/>
            <person name="Becker I."/>
            <person name="Amann J."/>
            <person name="Gellner K."/>
            <person name="Teeling H."/>
            <person name="Leuschner W.D."/>
            <person name="Gloeckner F.-O."/>
            <person name="Lupas A.N."/>
            <person name="Amann R."/>
            <person name="Klenk H.-P."/>
        </authorList>
    </citation>
    <scope>NUCLEOTIDE SEQUENCE [LARGE SCALE GENOMIC DNA]</scope>
    <source>
        <strain>DSM 12343 / LSv54</strain>
    </source>
</reference>
<feature type="chain" id="PRO_0000268337" description="Bifunctional protein FolD">
    <location>
        <begin position="1"/>
        <end position="296"/>
    </location>
</feature>
<feature type="binding site" evidence="1">
    <location>
        <begin position="168"/>
        <end position="170"/>
    </location>
    <ligand>
        <name>NADP(+)</name>
        <dbReference type="ChEBI" id="CHEBI:58349"/>
    </ligand>
</feature>
<feature type="binding site" evidence="1">
    <location>
        <position position="197"/>
    </location>
    <ligand>
        <name>NADP(+)</name>
        <dbReference type="ChEBI" id="CHEBI:58349"/>
    </ligand>
</feature>
<feature type="binding site" evidence="1">
    <location>
        <position position="238"/>
    </location>
    <ligand>
        <name>NADP(+)</name>
        <dbReference type="ChEBI" id="CHEBI:58349"/>
    </ligand>
</feature>
<proteinExistence type="inferred from homology"/>
<gene>
    <name evidence="1" type="primary">folD</name>
    <name type="ordered locus">DP1901</name>
</gene>
<sequence>MSAKIISGTEIRKEILGEIKDAVTEMKDKYGTVPGLVTILVGESPASMSYVSLKIKTALSLGFYEVQESLSVETTEAELLALIEKYNNDDSIHGVLVQLPLPKHINEQNIITAIDPDKDVDAFHPVNIGRLMIGGDDVKFLPCTPAGIQEMLVRSGVETAGAEVVVVGRSNIVGKPIAMMMAQKGIGANATVTIVHTGSRDLATHCRRADILIVAAGVPNLVKPEWIKPGATVIDVGVNRVGTNSETGKAILRGDVDFEAVKEIAGKITPVPGGVGPMTIAMLMKNTLASALAHSS</sequence>
<name>FOLD_DESPS</name>